<feature type="chain" id="PRO_0000161556" description="P2X purinoceptor 5">
    <location>
        <begin position="1"/>
        <end position="455"/>
    </location>
</feature>
<feature type="topological domain" description="Cytoplasmic" evidence="13">
    <location>
        <begin position="1"/>
        <end position="34"/>
    </location>
</feature>
<feature type="transmembrane region" description="Helical; Name=1" evidence="1">
    <location>
        <begin position="35"/>
        <end position="55"/>
    </location>
</feature>
<feature type="topological domain" description="Extracellular" evidence="13">
    <location>
        <begin position="56"/>
        <end position="341"/>
    </location>
</feature>
<feature type="transmembrane region" description="Helical; Name=2" evidence="2">
    <location>
        <begin position="342"/>
        <end position="362"/>
    </location>
</feature>
<feature type="topological domain" description="Cytoplasmic" evidence="13">
    <location>
        <begin position="363"/>
        <end position="455"/>
    </location>
</feature>
<feature type="region of interest" description="Disordered" evidence="6">
    <location>
        <begin position="384"/>
        <end position="422"/>
    </location>
</feature>
<feature type="compositionally biased region" description="Acidic residues" evidence="6">
    <location>
        <begin position="384"/>
        <end position="401"/>
    </location>
</feature>
<feature type="compositionally biased region" description="Polar residues" evidence="6">
    <location>
        <begin position="412"/>
        <end position="422"/>
    </location>
</feature>
<feature type="binding site" evidence="1">
    <location>
        <position position="69"/>
    </location>
    <ligand>
        <name>ATP</name>
        <dbReference type="ChEBI" id="CHEBI:30616"/>
    </ligand>
</feature>
<feature type="binding site" evidence="1">
    <location>
        <position position="71"/>
    </location>
    <ligand>
        <name>ATP</name>
        <dbReference type="ChEBI" id="CHEBI:30616"/>
    </ligand>
</feature>
<feature type="binding site" evidence="1">
    <location>
        <position position="189"/>
    </location>
    <ligand>
        <name>ATP</name>
        <dbReference type="ChEBI" id="CHEBI:30616"/>
    </ligand>
</feature>
<feature type="binding site" evidence="1">
    <location>
        <position position="294"/>
    </location>
    <ligand>
        <name>ATP</name>
        <dbReference type="ChEBI" id="CHEBI:30616"/>
    </ligand>
</feature>
<feature type="binding site" evidence="1">
    <location>
        <position position="296"/>
    </location>
    <ligand>
        <name>ATP</name>
        <dbReference type="ChEBI" id="CHEBI:30616"/>
    </ligand>
</feature>
<feature type="binding site" evidence="1">
    <location>
        <position position="314"/>
    </location>
    <ligand>
        <name>ATP</name>
        <dbReference type="ChEBI" id="CHEBI:30616"/>
    </ligand>
</feature>
<feature type="glycosylation site" description="N-linked (GlcNAc...) asparagine" evidence="5">
    <location>
        <position position="77"/>
    </location>
</feature>
<feature type="glycosylation site" description="N-linked (GlcNAc...) asparagine" evidence="5">
    <location>
        <position position="157"/>
    </location>
</feature>
<feature type="glycosylation site" description="N-linked (GlcNAc...) asparagine" evidence="5">
    <location>
        <position position="202"/>
    </location>
</feature>
<feature type="disulfide bond" evidence="1">
    <location>
        <begin position="118"/>
        <end position="169"/>
    </location>
</feature>
<feature type="disulfide bond" evidence="1">
    <location>
        <begin position="129"/>
        <end position="152"/>
    </location>
</feature>
<feature type="disulfide bond" evidence="1">
    <location>
        <begin position="135"/>
        <end position="163"/>
    </location>
</feature>
<feature type="disulfide bond" evidence="1">
    <location>
        <begin position="220"/>
        <end position="229"/>
    </location>
</feature>
<feature type="disulfide bond" evidence="1">
    <location>
        <begin position="263"/>
        <end position="272"/>
    </location>
</feature>
<feature type="mutagenesis site" description="Increases the ATP-evoked response." evidence="9">
    <original>V</original>
    <variation>I</variation>
    <location>
        <position position="67"/>
    </location>
</feature>
<feature type="mutagenesis site" description="Increases the ATP-evoked response." evidence="9">
    <original>F</original>
    <variation>H</variation>
    <location>
        <position position="195"/>
    </location>
</feature>
<feature type="sequence conflict" description="In Ref. 1; CAA63052." evidence="13" ref="1">
    <original>F</original>
    <variation>S</variation>
    <location>
        <position position="191"/>
    </location>
</feature>
<feature type="sequence conflict" description="In Ref. 2; CAA65993." evidence="13" ref="2">
    <original>R</original>
    <variation>Q</variation>
    <location>
        <position position="396"/>
    </location>
</feature>
<comment type="function">
    <text evidence="3 4 11">ATP-gated nonselective transmembrane cation channel (PubMed:8786426). Permeable to potassium, sodium and calcium (By similarity). Unlike other P2RX receptors, the P2X5 receptor is also permeable to chloride (By similarity). Acts as an important regulator of inflammatory-related bone loss and osteoclast multinucleation (By similarity).</text>
</comment>
<comment type="catalytic activity">
    <reaction evidence="4">
        <text>Na(+)(in) = Na(+)(out)</text>
        <dbReference type="Rhea" id="RHEA:34963"/>
        <dbReference type="ChEBI" id="CHEBI:29101"/>
    </reaction>
</comment>
<comment type="catalytic activity">
    <reaction evidence="4">
        <text>Ca(2+)(in) = Ca(2+)(out)</text>
        <dbReference type="Rhea" id="RHEA:29671"/>
        <dbReference type="ChEBI" id="CHEBI:29108"/>
    </reaction>
</comment>
<comment type="catalytic activity">
    <reaction evidence="4">
        <text>chloride(in) = chloride(out)</text>
        <dbReference type="Rhea" id="RHEA:29823"/>
        <dbReference type="ChEBI" id="CHEBI:17996"/>
    </reaction>
</comment>
<comment type="activity regulation">
    <text evidence="10 11">Activated by ATP (PubMed:8690069, PubMed:8786426). Slowly desensitizing (PubMed:8786426). Not activated by ATP agonist alpha/beta-methylene-ATP (PubMed:8690069, PubMed:8786426). Highly sensitive to the antagonists suramin and PPADS (PubMed:8690069, PubMed:8786426).</text>
</comment>
<comment type="subunit">
    <text evidence="7 8 12">Functional P2XRs are organized as homomeric and heteromeric trimers. Homotrimer (PubMed:17001079). Forms heterotrimer with P2RX1 (PubMed:10336430, PubMed:9855626).</text>
</comment>
<comment type="subcellular location">
    <subcellularLocation>
        <location evidence="4">Cell membrane</location>
        <topology evidence="2">Multi-pass membrane protein</topology>
    </subcellularLocation>
</comment>
<comment type="tissue specificity">
    <text evidence="10">Predominantly expressed in heart but are also present in brain, spinal cord and adrenal gland.</text>
</comment>
<comment type="domain">
    <text evidence="4">The second transmembrane domain and the conserved Asp-355 are essential for P2RX5 subunit assembly.</text>
</comment>
<comment type="similarity">
    <text evidence="13">Belongs to the P2X receptor family.</text>
</comment>
<protein>
    <recommendedName>
        <fullName>P2X purinoceptor 5</fullName>
        <shortName>P2X5</shortName>
    </recommendedName>
    <alternativeName>
        <fullName>ATP receptor</fullName>
    </alternativeName>
    <alternativeName>
        <fullName>Purinergic receptor</fullName>
    </alternativeName>
</protein>
<reference key="1">
    <citation type="journal article" date="1996" name="J. Neurosci.">
        <title>Cloning of P2X5 and P2X6 receptors and the distribution and properties of an extended family of ATP-gated ion channels.</title>
        <authorList>
            <person name="Collo G."/>
            <person name="Kawashima E."/>
            <person name="Pich E."/>
            <person name="Neidhart S."/>
            <person name="North R.A."/>
            <person name="Surprenant A."/>
            <person name="Buell G.N."/>
        </authorList>
    </citation>
    <scope>NUCLEOTIDE SEQUENCE [MRNA]</scope>
    <scope>FUNCTION</scope>
    <scope>ACTIVITY REGULATION</scope>
    <source>
        <tissue>Coeliac ganglion</tissue>
    </source>
</reference>
<reference key="2">
    <citation type="journal article" date="1996" name="FEBS Lett.">
        <title>Molecular cloning and functional expression of a novel rat heart P2X purinoceptor.</title>
        <authorList>
            <person name="Garcia-Guzman M."/>
            <person name="Soto F."/>
            <person name="Laube B."/>
            <person name="Stuehmer W."/>
        </authorList>
    </citation>
    <scope>NUCLEOTIDE SEQUENCE [MRNA]</scope>
    <scope>FUNCTION</scope>
    <scope>TISSUE SPECIFICITY</scope>
    <scope>ACTIVITY REGULATION</scope>
    <source>
        <strain>Sprague-Dawley</strain>
        <tissue>Heart</tissue>
    </source>
</reference>
<reference key="3">
    <citation type="journal article" date="2004" name="Nature">
        <title>Genome sequence of the Brown Norway rat yields insights into mammalian evolution.</title>
        <authorList>
            <person name="Gibbs R.A."/>
            <person name="Weinstock G.M."/>
            <person name="Metzker M.L."/>
            <person name="Muzny D.M."/>
            <person name="Sodergren E.J."/>
            <person name="Scherer S."/>
            <person name="Scott G."/>
            <person name="Steffen D."/>
            <person name="Worley K.C."/>
            <person name="Burch P.E."/>
            <person name="Okwuonu G."/>
            <person name="Hines S."/>
            <person name="Lewis L."/>
            <person name="Deramo C."/>
            <person name="Delgado O."/>
            <person name="Dugan-Rocha S."/>
            <person name="Miner G."/>
            <person name="Morgan M."/>
            <person name="Hawes A."/>
            <person name="Gill R."/>
            <person name="Holt R.A."/>
            <person name="Adams M.D."/>
            <person name="Amanatides P.G."/>
            <person name="Baden-Tillson H."/>
            <person name="Barnstead M."/>
            <person name="Chin S."/>
            <person name="Evans C.A."/>
            <person name="Ferriera S."/>
            <person name="Fosler C."/>
            <person name="Glodek A."/>
            <person name="Gu Z."/>
            <person name="Jennings D."/>
            <person name="Kraft C.L."/>
            <person name="Nguyen T."/>
            <person name="Pfannkoch C.M."/>
            <person name="Sitter C."/>
            <person name="Sutton G.G."/>
            <person name="Venter J.C."/>
            <person name="Woodage T."/>
            <person name="Smith D."/>
            <person name="Lee H.-M."/>
            <person name="Gustafson E."/>
            <person name="Cahill P."/>
            <person name="Kana A."/>
            <person name="Doucette-Stamm L."/>
            <person name="Weinstock K."/>
            <person name="Fechtel K."/>
            <person name="Weiss R.B."/>
            <person name="Dunn D.M."/>
            <person name="Green E.D."/>
            <person name="Blakesley R.W."/>
            <person name="Bouffard G.G."/>
            <person name="De Jong P.J."/>
            <person name="Osoegawa K."/>
            <person name="Zhu B."/>
            <person name="Marra M."/>
            <person name="Schein J."/>
            <person name="Bosdet I."/>
            <person name="Fjell C."/>
            <person name="Jones S."/>
            <person name="Krzywinski M."/>
            <person name="Mathewson C."/>
            <person name="Siddiqui A."/>
            <person name="Wye N."/>
            <person name="McPherson J."/>
            <person name="Zhao S."/>
            <person name="Fraser C.M."/>
            <person name="Shetty J."/>
            <person name="Shatsman S."/>
            <person name="Geer K."/>
            <person name="Chen Y."/>
            <person name="Abramzon S."/>
            <person name="Nierman W.C."/>
            <person name="Havlak P.H."/>
            <person name="Chen R."/>
            <person name="Durbin K.J."/>
            <person name="Egan A."/>
            <person name="Ren Y."/>
            <person name="Song X.-Z."/>
            <person name="Li B."/>
            <person name="Liu Y."/>
            <person name="Qin X."/>
            <person name="Cawley S."/>
            <person name="Cooney A.J."/>
            <person name="D'Souza L.M."/>
            <person name="Martin K."/>
            <person name="Wu J.Q."/>
            <person name="Gonzalez-Garay M.L."/>
            <person name="Jackson A.R."/>
            <person name="Kalafus K.J."/>
            <person name="McLeod M.P."/>
            <person name="Milosavljevic A."/>
            <person name="Virk D."/>
            <person name="Volkov A."/>
            <person name="Wheeler D.A."/>
            <person name="Zhang Z."/>
            <person name="Bailey J.A."/>
            <person name="Eichler E.E."/>
            <person name="Tuzun E."/>
            <person name="Birney E."/>
            <person name="Mongin E."/>
            <person name="Ureta-Vidal A."/>
            <person name="Woodwark C."/>
            <person name="Zdobnov E."/>
            <person name="Bork P."/>
            <person name="Suyama M."/>
            <person name="Torrents D."/>
            <person name="Alexandersson M."/>
            <person name="Trask B.J."/>
            <person name="Young J.M."/>
            <person name="Huang H."/>
            <person name="Wang H."/>
            <person name="Xing H."/>
            <person name="Daniels S."/>
            <person name="Gietzen D."/>
            <person name="Schmidt J."/>
            <person name="Stevens K."/>
            <person name="Vitt U."/>
            <person name="Wingrove J."/>
            <person name="Camara F."/>
            <person name="Mar Alba M."/>
            <person name="Abril J.F."/>
            <person name="Guigo R."/>
            <person name="Smit A."/>
            <person name="Dubchak I."/>
            <person name="Rubin E.M."/>
            <person name="Couronne O."/>
            <person name="Poliakov A."/>
            <person name="Huebner N."/>
            <person name="Ganten D."/>
            <person name="Goesele C."/>
            <person name="Hummel O."/>
            <person name="Kreitler T."/>
            <person name="Lee Y.-A."/>
            <person name="Monti J."/>
            <person name="Schulz H."/>
            <person name="Zimdahl H."/>
            <person name="Himmelbauer H."/>
            <person name="Lehrach H."/>
            <person name="Jacob H.J."/>
            <person name="Bromberg S."/>
            <person name="Gullings-Handley J."/>
            <person name="Jensen-Seaman M.I."/>
            <person name="Kwitek A.E."/>
            <person name="Lazar J."/>
            <person name="Pasko D."/>
            <person name="Tonellato P.J."/>
            <person name="Twigger S."/>
            <person name="Ponting C.P."/>
            <person name="Duarte J.M."/>
            <person name="Rice S."/>
            <person name="Goodstadt L."/>
            <person name="Beatson S.A."/>
            <person name="Emes R.D."/>
            <person name="Winter E.E."/>
            <person name="Webber C."/>
            <person name="Brandt P."/>
            <person name="Nyakatura G."/>
            <person name="Adetobi M."/>
            <person name="Chiaromonte F."/>
            <person name="Elnitski L."/>
            <person name="Eswara P."/>
            <person name="Hardison R.C."/>
            <person name="Hou M."/>
            <person name="Kolbe D."/>
            <person name="Makova K."/>
            <person name="Miller W."/>
            <person name="Nekrutenko A."/>
            <person name="Riemer C."/>
            <person name="Schwartz S."/>
            <person name="Taylor J."/>
            <person name="Yang S."/>
            <person name="Zhang Y."/>
            <person name="Lindpaintner K."/>
            <person name="Andrews T.D."/>
            <person name="Caccamo M."/>
            <person name="Clamp M."/>
            <person name="Clarke L."/>
            <person name="Curwen V."/>
            <person name="Durbin R.M."/>
            <person name="Eyras E."/>
            <person name="Searle S.M."/>
            <person name="Cooper G.M."/>
            <person name="Batzoglou S."/>
            <person name="Brudno M."/>
            <person name="Sidow A."/>
            <person name="Stone E.A."/>
            <person name="Payseur B.A."/>
            <person name="Bourque G."/>
            <person name="Lopez-Otin C."/>
            <person name="Puente X.S."/>
            <person name="Chakrabarti K."/>
            <person name="Chatterji S."/>
            <person name="Dewey C."/>
            <person name="Pachter L."/>
            <person name="Bray N."/>
            <person name="Yap V.B."/>
            <person name="Caspi A."/>
            <person name="Tesler G."/>
            <person name="Pevzner P.A."/>
            <person name="Haussler D."/>
            <person name="Roskin K.M."/>
            <person name="Baertsch R."/>
            <person name="Clawson H."/>
            <person name="Furey T.S."/>
            <person name="Hinrichs A.S."/>
            <person name="Karolchik D."/>
            <person name="Kent W.J."/>
            <person name="Rosenbloom K.R."/>
            <person name="Trumbower H."/>
            <person name="Weirauch M."/>
            <person name="Cooper D.N."/>
            <person name="Stenson P.D."/>
            <person name="Ma B."/>
            <person name="Brent M."/>
            <person name="Arumugam M."/>
            <person name="Shteynberg D."/>
            <person name="Copley R.R."/>
            <person name="Taylor M.S."/>
            <person name="Riethman H."/>
            <person name="Mudunuri U."/>
            <person name="Peterson J."/>
            <person name="Guyer M."/>
            <person name="Felsenfeld A."/>
            <person name="Old S."/>
            <person name="Mockrin S."/>
            <person name="Collins F.S."/>
        </authorList>
    </citation>
    <scope>NUCLEOTIDE SEQUENCE [LARGE SCALE GENOMIC DNA]</scope>
    <source>
        <strain>Brown Norway</strain>
    </source>
</reference>
<reference key="4">
    <citation type="submission" date="2005-07" db="EMBL/GenBank/DDBJ databases">
        <authorList>
            <person name="Mural R.J."/>
            <person name="Li P.W."/>
            <person name="Adams M.D."/>
            <person name="Amanatides P.G."/>
            <person name="Baden-Tillson H."/>
            <person name="Barnstead M."/>
            <person name="Chin S.H."/>
            <person name="Dew I."/>
            <person name="Evans C.A."/>
            <person name="Ferriera S."/>
            <person name="Flanigan M."/>
            <person name="Fosler C."/>
            <person name="Glodek A."/>
            <person name="Gu Z."/>
            <person name="Holt R.A."/>
            <person name="Jennings D."/>
            <person name="Kraft C.L."/>
            <person name="Lu F."/>
            <person name="Nguyen T."/>
            <person name="Nusskern D.R."/>
            <person name="Pfannkoch C.M."/>
            <person name="Sitter C."/>
            <person name="Sutton G.G."/>
            <person name="Venter J.C."/>
            <person name="Wang Z."/>
            <person name="Woodage T."/>
            <person name="Zheng X.H."/>
            <person name="Zhong F."/>
        </authorList>
    </citation>
    <scope>NUCLEOTIDE SEQUENCE [LARGE SCALE GENOMIC DNA]</scope>
</reference>
<reference key="5">
    <citation type="journal article" date="1998" name="Mol. Pharmacol.">
        <title>Co-expression of P2X1 and P2X5 receptor subunits reveals a novel ATP-gated ion channel.</title>
        <authorList>
            <person name="Torres G.E."/>
            <person name="Haines W.R."/>
            <person name="Egan T.M."/>
            <person name="Voigt M.M."/>
        </authorList>
    </citation>
    <scope>SUBUNIT</scope>
    <scope>INTERACTION WITH P2RX1</scope>
</reference>
<reference key="6">
    <citation type="journal article" date="1999" name="J. Biol. Chem.">
        <title>Functional and biochemical evidence for heteromeric ATP-gated channels composed of P2X1 and P2X5 subunits.</title>
        <authorList>
            <person name="Le K.T."/>
            <person name="Boue-Grabot E."/>
            <person name="Archambault V."/>
            <person name="Seguela P."/>
        </authorList>
    </citation>
    <scope>SUBUNIT</scope>
    <scope>INTERACTION WITH P2RX1</scope>
</reference>
<reference key="7">
    <citation type="journal article" date="2006" name="J. Biol. Chem.">
        <title>P2X5 subunit assembly requires scaffolding by the second transmembrane domain and a conserved aspartate.</title>
        <authorList>
            <person name="Duckwitz W."/>
            <person name="Hausmann R."/>
            <person name="Aschrafi A."/>
            <person name="Schmalzing G."/>
        </authorList>
    </citation>
    <scope>SUBUNIT</scope>
</reference>
<reference key="8">
    <citation type="journal article" date="2019" name="J. Biol. Chem.">
        <title>Altered allostery of the left flipper domain underlies the weak ATP response of rat P2X5 receptors.</title>
        <authorList>
            <person name="Sun L.F."/>
            <person name="Liu Y."/>
            <person name="Wang J."/>
            <person name="Huang L.D."/>
            <person name="Yang Y."/>
            <person name="Cheng X.Y."/>
            <person name="Fan Y.Z."/>
            <person name="Zhu M.X."/>
            <person name="Liang H."/>
            <person name="Tian Y."/>
            <person name="Wang H.S."/>
            <person name="Guo C.R."/>
            <person name="Yu Y."/>
        </authorList>
    </citation>
    <scope>FUNCTION</scope>
    <scope>MUTAGENESIS OF VAL-67 AND PHE-195</scope>
</reference>
<keyword id="KW-0067">ATP-binding</keyword>
<keyword id="KW-1003">Cell membrane</keyword>
<keyword id="KW-1015">Disulfide bond</keyword>
<keyword id="KW-0325">Glycoprotein</keyword>
<keyword id="KW-0407">Ion channel</keyword>
<keyword id="KW-0406">Ion transport</keyword>
<keyword id="KW-1071">Ligand-gated ion channel</keyword>
<keyword id="KW-0472">Membrane</keyword>
<keyword id="KW-0547">Nucleotide-binding</keyword>
<keyword id="KW-0675">Receptor</keyword>
<keyword id="KW-1185">Reference proteome</keyword>
<keyword id="KW-0812">Transmembrane</keyword>
<keyword id="KW-1133">Transmembrane helix</keyword>
<keyword id="KW-0813">Transport</keyword>
<gene>
    <name type="primary">P2rx5</name>
</gene>
<proteinExistence type="evidence at protein level"/>
<dbReference type="EMBL" id="X92069">
    <property type="protein sequence ID" value="CAA63052.1"/>
    <property type="molecule type" value="mRNA"/>
</dbReference>
<dbReference type="EMBL" id="X97328">
    <property type="protein sequence ID" value="CAA65993.1"/>
    <property type="molecule type" value="mRNA"/>
</dbReference>
<dbReference type="EMBL" id="AC126839">
    <property type="status" value="NOT_ANNOTATED_CDS"/>
    <property type="molecule type" value="Genomic_DNA"/>
</dbReference>
<dbReference type="EMBL" id="CH473948">
    <property type="protein sequence ID" value="EDM05136.1"/>
    <property type="molecule type" value="Genomic_DNA"/>
</dbReference>
<dbReference type="PIR" id="S71344">
    <property type="entry name" value="S71344"/>
</dbReference>
<dbReference type="RefSeq" id="NP_542958.2">
    <property type="nucleotide sequence ID" value="NM_080780.2"/>
</dbReference>
<dbReference type="SMR" id="P51578"/>
<dbReference type="FunCoup" id="P51578">
    <property type="interactions" value="5"/>
</dbReference>
<dbReference type="STRING" id="10116.ENSRNOP00000026156"/>
<dbReference type="BindingDB" id="P51578"/>
<dbReference type="ChEMBL" id="CHEMBL2495"/>
<dbReference type="DrugCentral" id="P51578"/>
<dbReference type="GuidetoPHARMACOLOGY" id="482"/>
<dbReference type="GlyCosmos" id="P51578">
    <property type="glycosylation" value="3 sites, No reported glycans"/>
</dbReference>
<dbReference type="GlyGen" id="P51578">
    <property type="glycosylation" value="3 sites"/>
</dbReference>
<dbReference type="PhosphoSitePlus" id="P51578"/>
<dbReference type="PaxDb" id="10116-ENSRNOP00000026156"/>
<dbReference type="Ensembl" id="ENSRNOT00000026156.6">
    <property type="protein sequence ID" value="ENSRNOP00000026156.2"/>
    <property type="gene ID" value="ENSRNOG00000019208.8"/>
</dbReference>
<dbReference type="GeneID" id="113995"/>
<dbReference type="KEGG" id="rno:113995"/>
<dbReference type="AGR" id="RGD:620256"/>
<dbReference type="CTD" id="5026"/>
<dbReference type="RGD" id="620256">
    <property type="gene designation" value="P2rx5"/>
</dbReference>
<dbReference type="eggNOG" id="ENOG502QSUI">
    <property type="taxonomic scope" value="Eukaryota"/>
</dbReference>
<dbReference type="GeneTree" id="ENSGT01020000230351"/>
<dbReference type="HOGENOM" id="CLU_034469_2_0_1"/>
<dbReference type="InParanoid" id="P51578"/>
<dbReference type="OMA" id="GIHIEWN"/>
<dbReference type="PhylomeDB" id="P51578"/>
<dbReference type="Reactome" id="R-RNO-139853">
    <property type="pathway name" value="Elevation of cytosolic Ca2+ levels"/>
</dbReference>
<dbReference type="Reactome" id="R-RNO-418346">
    <property type="pathway name" value="Platelet homeostasis"/>
</dbReference>
<dbReference type="PRO" id="PR:P51578"/>
<dbReference type="Proteomes" id="UP000002494">
    <property type="component" value="Chromosome 10"/>
</dbReference>
<dbReference type="Proteomes" id="UP000234681">
    <property type="component" value="Chromosome 10"/>
</dbReference>
<dbReference type="Bgee" id="ENSRNOG00000019208">
    <property type="expression patterns" value="Expressed in heart and 12 other cell types or tissues"/>
</dbReference>
<dbReference type="GO" id="GO:0005886">
    <property type="term" value="C:plasma membrane"/>
    <property type="evidence" value="ECO:0000250"/>
    <property type="project" value="UniProtKB"/>
</dbReference>
<dbReference type="GO" id="GO:0098794">
    <property type="term" value="C:postsynapse"/>
    <property type="evidence" value="ECO:0007669"/>
    <property type="project" value="GOC"/>
</dbReference>
<dbReference type="GO" id="GO:0005524">
    <property type="term" value="F:ATP binding"/>
    <property type="evidence" value="ECO:0000314"/>
    <property type="project" value="RGD"/>
</dbReference>
<dbReference type="GO" id="GO:0035381">
    <property type="term" value="F:ATP-gated ion channel activity"/>
    <property type="evidence" value="ECO:0000314"/>
    <property type="project" value="UniProtKB"/>
</dbReference>
<dbReference type="GO" id="GO:0004931">
    <property type="term" value="F:extracellularly ATP-gated monoatomic cation channel activity"/>
    <property type="evidence" value="ECO:0000314"/>
    <property type="project" value="RGD"/>
</dbReference>
<dbReference type="GO" id="GO:0042802">
    <property type="term" value="F:identical protein binding"/>
    <property type="evidence" value="ECO:0000314"/>
    <property type="project" value="UniProtKB"/>
</dbReference>
<dbReference type="GO" id="GO:0099095">
    <property type="term" value="F:ligand-gated monoatomic anion channel activity"/>
    <property type="evidence" value="ECO:0000250"/>
    <property type="project" value="UniProtKB"/>
</dbReference>
<dbReference type="GO" id="GO:0001614">
    <property type="term" value="F:purinergic nucleotide receptor activity"/>
    <property type="evidence" value="ECO:0007669"/>
    <property type="project" value="InterPro"/>
</dbReference>
<dbReference type="GO" id="GO:0005244">
    <property type="term" value="F:voltage-gated monoatomic ion channel activity"/>
    <property type="evidence" value="ECO:0000314"/>
    <property type="project" value="RGD"/>
</dbReference>
<dbReference type="GO" id="GO:0070588">
    <property type="term" value="P:calcium ion transmembrane transport"/>
    <property type="evidence" value="ECO:0000318"/>
    <property type="project" value="GO_Central"/>
</dbReference>
<dbReference type="GO" id="GO:0006821">
    <property type="term" value="P:chloride transport"/>
    <property type="evidence" value="ECO:0000250"/>
    <property type="project" value="UniProtKB"/>
</dbReference>
<dbReference type="GO" id="GO:0098655">
    <property type="term" value="P:monoatomic cation transmembrane transport"/>
    <property type="evidence" value="ECO:0000314"/>
    <property type="project" value="RGD"/>
</dbReference>
<dbReference type="GO" id="GO:0006812">
    <property type="term" value="P:monoatomic cation transport"/>
    <property type="evidence" value="ECO:0000304"/>
    <property type="project" value="RGD"/>
</dbReference>
<dbReference type="GO" id="GO:0036179">
    <property type="term" value="P:osteoclast maturation"/>
    <property type="evidence" value="ECO:0000250"/>
    <property type="project" value="UniProtKB"/>
</dbReference>
<dbReference type="GO" id="GO:1905665">
    <property type="term" value="P:positive regulation of calcium ion import across plasma membrane"/>
    <property type="evidence" value="ECO:0000314"/>
    <property type="project" value="RGD"/>
</dbReference>
<dbReference type="GO" id="GO:0043416">
    <property type="term" value="P:regulation of skeletal muscle tissue regeneration"/>
    <property type="evidence" value="ECO:0000315"/>
    <property type="project" value="RGD"/>
</dbReference>
<dbReference type="GO" id="GO:0033198">
    <property type="term" value="P:response to ATP"/>
    <property type="evidence" value="ECO:0000314"/>
    <property type="project" value="RGD"/>
</dbReference>
<dbReference type="GO" id="GO:0051592">
    <property type="term" value="P:response to calcium ion"/>
    <property type="evidence" value="ECO:0000314"/>
    <property type="project" value="RGD"/>
</dbReference>
<dbReference type="GO" id="GO:0009268">
    <property type="term" value="P:response to pH"/>
    <property type="evidence" value="ECO:0000314"/>
    <property type="project" value="RGD"/>
</dbReference>
<dbReference type="GO" id="GO:0010043">
    <property type="term" value="P:response to zinc ion"/>
    <property type="evidence" value="ECO:0000314"/>
    <property type="project" value="RGD"/>
</dbReference>
<dbReference type="GO" id="GO:0048630">
    <property type="term" value="P:skeletal muscle tissue growth"/>
    <property type="evidence" value="ECO:0000304"/>
    <property type="project" value="RGD"/>
</dbReference>
<dbReference type="FunFam" id="2.60.490.10:FF:000001">
    <property type="entry name" value="P2X purinoceptor"/>
    <property type="match status" value="1"/>
</dbReference>
<dbReference type="FunFam" id="1.10.287.940:FF:000010">
    <property type="entry name" value="P2X receptor E"/>
    <property type="match status" value="1"/>
</dbReference>
<dbReference type="Gene3D" id="1.10.287.940">
    <property type="entry name" value="atp-gated p2x4 ion channel"/>
    <property type="match status" value="1"/>
</dbReference>
<dbReference type="Gene3D" id="2.60.490.10">
    <property type="entry name" value="atp-gated p2x4 ion channel domain"/>
    <property type="match status" value="1"/>
</dbReference>
<dbReference type="InterPro" id="IPR003048">
    <property type="entry name" value="P2X5_purnocptor"/>
</dbReference>
<dbReference type="InterPro" id="IPR027309">
    <property type="entry name" value="P2X_extracellular_dom_sf"/>
</dbReference>
<dbReference type="InterPro" id="IPR001429">
    <property type="entry name" value="P2X_purnocptor"/>
</dbReference>
<dbReference type="InterPro" id="IPR053792">
    <property type="entry name" value="P2X_RECEPTOR_CS"/>
</dbReference>
<dbReference type="NCBIfam" id="TIGR00863">
    <property type="entry name" value="P2X"/>
    <property type="match status" value="1"/>
</dbReference>
<dbReference type="PANTHER" id="PTHR10125">
    <property type="entry name" value="P2X PURINOCEPTOR"/>
    <property type="match status" value="1"/>
</dbReference>
<dbReference type="PANTHER" id="PTHR10125:SF12">
    <property type="entry name" value="P2X PURINOCEPTOR 5"/>
    <property type="match status" value="1"/>
</dbReference>
<dbReference type="Pfam" id="PF00864">
    <property type="entry name" value="P2X_receptor"/>
    <property type="match status" value="1"/>
</dbReference>
<dbReference type="PIRSF" id="PIRSF005713">
    <property type="entry name" value="P2X_purinoceptor"/>
    <property type="match status" value="1"/>
</dbReference>
<dbReference type="PRINTS" id="PR01312">
    <property type="entry name" value="P2X5RECEPTOR"/>
</dbReference>
<dbReference type="PRINTS" id="PR01307">
    <property type="entry name" value="P2XRECEPTOR"/>
</dbReference>
<dbReference type="PROSITE" id="PS01212">
    <property type="entry name" value="P2X_RECEPTOR"/>
    <property type="match status" value="1"/>
</dbReference>
<sequence>MGQAAWKGFVLSLFDYKTAKFVVAKSKKVGLLYRVLQLIILLYLLIWVFLIKKSYQDIDTSLQSAVVTKVKGVAYTNTTMLGERLWDVADFVIPSQGENVFFVVTNLIVTPNQRQGICAEREGIPDGECSEDDDCHAGESVVAGHGLKTGRCLRVGNSTRGTCEIFAWCPVETKSMPTDPLLKDAESFTIFIKNFIRFPKFNFSKANVLETDNKHFLKTCHFSSTNLYCPIFRLGSIVRWAGADFQDIALKGGVIGIYIEWDCDLDKAASKCNPHYYFNRLDNKHTHSISSGYNFRFARYYRDPNGVEFRDLMKAYGIRFDVIVNGKAGKFSIIPTVINIGSGLALMGAGAFFCDLVLIYLIRKSEFYRDKKFEKVRGQKEDANVEVEANEMEQERPEDEPLERVRQDEQSQELAQSGRKQNSNCQVLLEPARFGLRENAIVNVKQSQILHPVKT</sequence>
<organism>
    <name type="scientific">Rattus norvegicus</name>
    <name type="common">Rat</name>
    <dbReference type="NCBI Taxonomy" id="10116"/>
    <lineage>
        <taxon>Eukaryota</taxon>
        <taxon>Metazoa</taxon>
        <taxon>Chordata</taxon>
        <taxon>Craniata</taxon>
        <taxon>Vertebrata</taxon>
        <taxon>Euteleostomi</taxon>
        <taxon>Mammalia</taxon>
        <taxon>Eutheria</taxon>
        <taxon>Euarchontoglires</taxon>
        <taxon>Glires</taxon>
        <taxon>Rodentia</taxon>
        <taxon>Myomorpha</taxon>
        <taxon>Muroidea</taxon>
        <taxon>Muridae</taxon>
        <taxon>Murinae</taxon>
        <taxon>Rattus</taxon>
    </lineage>
</organism>
<evidence type="ECO:0000250" key="1">
    <source>
        <dbReference type="UniProtKB" id="F8W463"/>
    </source>
</evidence>
<evidence type="ECO:0000250" key="2">
    <source>
        <dbReference type="UniProtKB" id="P56373"/>
    </source>
</evidence>
<evidence type="ECO:0000250" key="3">
    <source>
        <dbReference type="UniProtKB" id="Q91VE2"/>
    </source>
</evidence>
<evidence type="ECO:0000250" key="4">
    <source>
        <dbReference type="UniProtKB" id="Q93086"/>
    </source>
</evidence>
<evidence type="ECO:0000255" key="5"/>
<evidence type="ECO:0000256" key="6">
    <source>
        <dbReference type="SAM" id="MobiDB-lite"/>
    </source>
</evidence>
<evidence type="ECO:0000269" key="7">
    <source>
    </source>
</evidence>
<evidence type="ECO:0000269" key="8">
    <source>
    </source>
</evidence>
<evidence type="ECO:0000269" key="9">
    <source>
    </source>
</evidence>
<evidence type="ECO:0000269" key="10">
    <source>
    </source>
</evidence>
<evidence type="ECO:0000269" key="11">
    <source>
    </source>
</evidence>
<evidence type="ECO:0000269" key="12">
    <source>
    </source>
</evidence>
<evidence type="ECO:0000305" key="13"/>
<name>P2RX5_RAT</name>
<accession>P51578</accession>
<accession>A6HGI1</accession>
<accession>G3V8I0</accession>
<accession>Q64613</accession>